<protein>
    <recommendedName>
        <fullName evidence="1">Small ribosomal subunit protein uS14</fullName>
    </recommendedName>
    <alternativeName>
        <fullName evidence="2">30S ribosomal protein S14 type Z</fullName>
    </alternativeName>
</protein>
<reference key="1">
    <citation type="journal article" date="2006" name="Nat. Biotechnol.">
        <title>The genome and transcriptomes of the anti-tumor agent Clostridium novyi-NT.</title>
        <authorList>
            <person name="Bettegowda C."/>
            <person name="Huang X."/>
            <person name="Lin J."/>
            <person name="Cheong I."/>
            <person name="Kohli M."/>
            <person name="Szabo S.A."/>
            <person name="Zhang X."/>
            <person name="Diaz L.A. Jr."/>
            <person name="Velculescu V.E."/>
            <person name="Parmigiani G."/>
            <person name="Kinzler K.W."/>
            <person name="Vogelstein B."/>
            <person name="Zhou S."/>
        </authorList>
    </citation>
    <scope>NUCLEOTIDE SEQUENCE [LARGE SCALE GENOMIC DNA]</scope>
    <source>
        <strain>NT</strain>
    </source>
</reference>
<gene>
    <name evidence="1" type="primary">rpsZ</name>
    <name evidence="1" type="synonym">rpsN</name>
    <name type="ordered locus">NT01CX_1128</name>
</gene>
<feature type="chain" id="PRO_1000067937" description="Small ribosomal subunit protein uS14">
    <location>
        <begin position="1"/>
        <end position="61"/>
    </location>
</feature>
<feature type="binding site" evidence="1">
    <location>
        <position position="24"/>
    </location>
    <ligand>
        <name>Zn(2+)</name>
        <dbReference type="ChEBI" id="CHEBI:29105"/>
    </ligand>
</feature>
<feature type="binding site" evidence="1">
    <location>
        <position position="27"/>
    </location>
    <ligand>
        <name>Zn(2+)</name>
        <dbReference type="ChEBI" id="CHEBI:29105"/>
    </ligand>
</feature>
<feature type="binding site" evidence="1">
    <location>
        <position position="40"/>
    </location>
    <ligand>
        <name>Zn(2+)</name>
        <dbReference type="ChEBI" id="CHEBI:29105"/>
    </ligand>
</feature>
<feature type="binding site" evidence="1">
    <location>
        <position position="43"/>
    </location>
    <ligand>
        <name>Zn(2+)</name>
        <dbReference type="ChEBI" id="CHEBI:29105"/>
    </ligand>
</feature>
<sequence length="61" mass="7226">MARKAMIEKWKKTPKYSTRAYTRCRICGRPHSVLKKYGICRICFRELAYRGQIPGCKKASW</sequence>
<keyword id="KW-0479">Metal-binding</keyword>
<keyword id="KW-1185">Reference proteome</keyword>
<keyword id="KW-0687">Ribonucleoprotein</keyword>
<keyword id="KW-0689">Ribosomal protein</keyword>
<keyword id="KW-0694">RNA-binding</keyword>
<keyword id="KW-0699">rRNA-binding</keyword>
<keyword id="KW-0862">Zinc</keyword>
<organism>
    <name type="scientific">Clostridium novyi (strain NT)</name>
    <dbReference type="NCBI Taxonomy" id="386415"/>
    <lineage>
        <taxon>Bacteria</taxon>
        <taxon>Bacillati</taxon>
        <taxon>Bacillota</taxon>
        <taxon>Clostridia</taxon>
        <taxon>Eubacteriales</taxon>
        <taxon>Clostridiaceae</taxon>
        <taxon>Clostridium</taxon>
    </lineage>
</organism>
<accession>A0PXV9</accession>
<evidence type="ECO:0000255" key="1">
    <source>
        <dbReference type="HAMAP-Rule" id="MF_01364"/>
    </source>
</evidence>
<evidence type="ECO:0000305" key="2"/>
<dbReference type="EMBL" id="CP000382">
    <property type="protein sequence ID" value="ABK61429.1"/>
    <property type="molecule type" value="Genomic_DNA"/>
</dbReference>
<dbReference type="RefSeq" id="WP_003375310.1">
    <property type="nucleotide sequence ID" value="NC_008593.1"/>
</dbReference>
<dbReference type="SMR" id="A0PXV9"/>
<dbReference type="STRING" id="386415.NT01CX_1128"/>
<dbReference type="KEGG" id="cno:NT01CX_1128"/>
<dbReference type="eggNOG" id="COG0199">
    <property type="taxonomic scope" value="Bacteria"/>
</dbReference>
<dbReference type="HOGENOM" id="CLU_139869_3_0_9"/>
<dbReference type="Proteomes" id="UP000008220">
    <property type="component" value="Chromosome"/>
</dbReference>
<dbReference type="GO" id="GO:0005737">
    <property type="term" value="C:cytoplasm"/>
    <property type="evidence" value="ECO:0007669"/>
    <property type="project" value="UniProtKB-ARBA"/>
</dbReference>
<dbReference type="GO" id="GO:0015935">
    <property type="term" value="C:small ribosomal subunit"/>
    <property type="evidence" value="ECO:0007669"/>
    <property type="project" value="TreeGrafter"/>
</dbReference>
<dbReference type="GO" id="GO:0019843">
    <property type="term" value="F:rRNA binding"/>
    <property type="evidence" value="ECO:0007669"/>
    <property type="project" value="UniProtKB-UniRule"/>
</dbReference>
<dbReference type="GO" id="GO:0003735">
    <property type="term" value="F:structural constituent of ribosome"/>
    <property type="evidence" value="ECO:0007669"/>
    <property type="project" value="InterPro"/>
</dbReference>
<dbReference type="GO" id="GO:0008270">
    <property type="term" value="F:zinc ion binding"/>
    <property type="evidence" value="ECO:0007669"/>
    <property type="project" value="UniProtKB-UniRule"/>
</dbReference>
<dbReference type="GO" id="GO:0006412">
    <property type="term" value="P:translation"/>
    <property type="evidence" value="ECO:0007669"/>
    <property type="project" value="UniProtKB-UniRule"/>
</dbReference>
<dbReference type="FunFam" id="4.10.830.10:FF:000001">
    <property type="entry name" value="30S ribosomal protein S14 type Z"/>
    <property type="match status" value="1"/>
</dbReference>
<dbReference type="Gene3D" id="4.10.830.10">
    <property type="entry name" value="30s Ribosomal Protein S14, Chain N"/>
    <property type="match status" value="1"/>
</dbReference>
<dbReference type="HAMAP" id="MF_01364_B">
    <property type="entry name" value="Ribosomal_uS14_2_B"/>
    <property type="match status" value="1"/>
</dbReference>
<dbReference type="InterPro" id="IPR001209">
    <property type="entry name" value="Ribosomal_uS14"/>
</dbReference>
<dbReference type="InterPro" id="IPR023053">
    <property type="entry name" value="Ribosomal_uS14_bact"/>
</dbReference>
<dbReference type="InterPro" id="IPR043140">
    <property type="entry name" value="Ribosomal_uS14_sf"/>
</dbReference>
<dbReference type="NCBIfam" id="NF005974">
    <property type="entry name" value="PRK08061.1"/>
    <property type="match status" value="1"/>
</dbReference>
<dbReference type="PANTHER" id="PTHR19836">
    <property type="entry name" value="30S RIBOSOMAL PROTEIN S14"/>
    <property type="match status" value="1"/>
</dbReference>
<dbReference type="PANTHER" id="PTHR19836:SF19">
    <property type="entry name" value="SMALL RIBOSOMAL SUBUNIT PROTEIN US14M"/>
    <property type="match status" value="1"/>
</dbReference>
<dbReference type="Pfam" id="PF00253">
    <property type="entry name" value="Ribosomal_S14"/>
    <property type="match status" value="1"/>
</dbReference>
<dbReference type="SUPFAM" id="SSF57716">
    <property type="entry name" value="Glucocorticoid receptor-like (DNA-binding domain)"/>
    <property type="match status" value="1"/>
</dbReference>
<proteinExistence type="inferred from homology"/>
<comment type="function">
    <text evidence="1">Binds 16S rRNA, required for the assembly of 30S particles and may also be responsible for determining the conformation of the 16S rRNA at the A site.</text>
</comment>
<comment type="cofactor">
    <cofactor evidence="1">
        <name>Zn(2+)</name>
        <dbReference type="ChEBI" id="CHEBI:29105"/>
    </cofactor>
    <text evidence="1">Binds 1 zinc ion per subunit.</text>
</comment>
<comment type="subunit">
    <text evidence="1">Part of the 30S ribosomal subunit. Contacts proteins S3 and S10.</text>
</comment>
<comment type="similarity">
    <text evidence="1">Belongs to the universal ribosomal protein uS14 family. Zinc-binding uS14 subfamily.</text>
</comment>
<name>RS14Z_CLONN</name>